<sequence>MNRLIILVFAAVFLTLASAEVSEDVNMAKRGVPCRCDSDGPHVRGNTLTGTVWVFGCPSGWHKCQKGSSTCCKQ</sequence>
<feature type="signal peptide" evidence="3">
    <location>
        <begin position="1"/>
        <end position="19"/>
    </location>
</feature>
<feature type="propeptide" id="PRO_0000034825">
    <location>
        <begin position="20"/>
        <end position="28"/>
    </location>
</feature>
<feature type="chain" id="PRO_0000034826" description="Delta-stichotoxin-Sgt2a" evidence="4">
    <location>
        <begin position="31"/>
        <end position="74"/>
    </location>
</feature>
<feature type="disulfide bond" evidence="2">
    <location>
        <begin position="34"/>
        <end position="71"/>
    </location>
</feature>
<feature type="disulfide bond" evidence="2">
    <location>
        <begin position="36"/>
        <end position="64"/>
    </location>
</feature>
<feature type="disulfide bond" evidence="2">
    <location>
        <begin position="57"/>
        <end position="72"/>
    </location>
</feature>
<reference key="1">
    <citation type="journal article" date="2003" name="Biochim. Biophys. Acta">
        <title>Molecular cloning of an epidermal growth factor-like toxin and two sodium channel toxins from the sea anemone Stichodactyla gigantea.</title>
        <authorList>
            <person name="Honma T."/>
            <person name="Nagai H."/>
            <person name="Nagashima Y."/>
            <person name="Shiomi K."/>
        </authorList>
    </citation>
    <scope>NUCLEOTIDE SEQUENCE [MRNA]</scope>
</reference>
<reference key="2">
    <citation type="journal article" date="2003" name="Toxicon">
        <title>An epidermal growth factor-like toxin and two sodium channel toxins from the sea anemone Stichodactyla gigantea.</title>
        <authorList>
            <person name="Shiomi K."/>
            <person name="Honma T."/>
            <person name="Ide M."/>
            <person name="Nagashima Y."/>
            <person name="Ishida M."/>
            <person name="Chino M."/>
        </authorList>
    </citation>
    <scope>PROTEIN SEQUENCE OF 31-74</scope>
    <scope>TOXIC DOSE</scope>
    <source>
        <tissue>Nematoblast</tissue>
    </source>
</reference>
<reference key="3">
    <citation type="journal article" date="2012" name="Toxicon">
        <title>Development of a rational nomenclature for naming peptide and protein toxins from sea anemones.</title>
        <authorList>
            <person name="Oliveira J.S."/>
            <person name="Fuentes-Silva D."/>
            <person name="King G.F."/>
        </authorList>
    </citation>
    <scope>NOMENCLATURE</scope>
</reference>
<comment type="function">
    <text evidence="1">Binds specifically to voltage-gated sodium channels (Nav), thereby delaying their inactivation during signal transduction.</text>
</comment>
<comment type="subcellular location">
    <subcellularLocation>
        <location evidence="8">Secreted</location>
    </subcellularLocation>
    <subcellularLocation>
        <location evidence="7">Nematocyst</location>
    </subcellularLocation>
</comment>
<comment type="toxic dose">
    <text evidence="4">LD(50) is 70 ug/kg to crabs.</text>
</comment>
<comment type="similarity">
    <text evidence="7">Belongs to the sea anemone sodium channel inhibitory toxin family. Type I subfamily.</text>
</comment>
<proteinExistence type="evidence at protein level"/>
<name>NA1G2_STIGI</name>
<protein>
    <recommendedName>
        <fullName evidence="6">Delta-stichotoxin-Sgt2a</fullName>
        <shortName evidence="6">Delta-SHTX-Sgt2a</shortName>
    </recommendedName>
    <alternativeName>
        <fullName evidence="5">Gigantoxin II</fullName>
        <shortName>Gigt II</shortName>
    </alternativeName>
    <alternativeName>
        <fullName>Gigantoxin-2</fullName>
    </alternativeName>
</protein>
<accession>Q76CA3</accession>
<keyword id="KW-0165">Cleavage on pair of basic residues</keyword>
<keyword id="KW-0903">Direct protein sequencing</keyword>
<keyword id="KW-1015">Disulfide bond</keyword>
<keyword id="KW-0872">Ion channel impairing toxin</keyword>
<keyword id="KW-0166">Nematocyst</keyword>
<keyword id="KW-0528">Neurotoxin</keyword>
<keyword id="KW-0964">Secreted</keyword>
<keyword id="KW-0732">Signal</keyword>
<keyword id="KW-0800">Toxin</keyword>
<keyword id="KW-0738">Voltage-gated sodium channel impairing toxin</keyword>
<organism>
    <name type="scientific">Stichodactyla gigantea</name>
    <name type="common">Giant carpet anemone</name>
    <name type="synonym">Priapus giganteus</name>
    <dbReference type="NCBI Taxonomy" id="230562"/>
    <lineage>
        <taxon>Eukaryota</taxon>
        <taxon>Metazoa</taxon>
        <taxon>Cnidaria</taxon>
        <taxon>Anthozoa</taxon>
        <taxon>Hexacorallia</taxon>
        <taxon>Actiniaria</taxon>
        <taxon>Stichodactylidae</taxon>
        <taxon>Stichodactyla</taxon>
    </lineage>
</organism>
<dbReference type="EMBL" id="AB110012">
    <property type="protein sequence ID" value="BAD01577.1"/>
    <property type="molecule type" value="mRNA"/>
</dbReference>
<dbReference type="SMR" id="Q76CA3"/>
<dbReference type="GO" id="GO:0005576">
    <property type="term" value="C:extracellular region"/>
    <property type="evidence" value="ECO:0007669"/>
    <property type="project" value="UniProtKB-SubCell"/>
</dbReference>
<dbReference type="GO" id="GO:0042151">
    <property type="term" value="C:nematocyst"/>
    <property type="evidence" value="ECO:0007669"/>
    <property type="project" value="UniProtKB-SubCell"/>
</dbReference>
<dbReference type="GO" id="GO:0017080">
    <property type="term" value="F:sodium channel regulator activity"/>
    <property type="evidence" value="ECO:0007669"/>
    <property type="project" value="UniProtKB-KW"/>
</dbReference>
<dbReference type="GO" id="GO:0090729">
    <property type="term" value="F:toxin activity"/>
    <property type="evidence" value="ECO:0007669"/>
    <property type="project" value="UniProtKB-KW"/>
</dbReference>
<dbReference type="Gene3D" id="2.20.20.10">
    <property type="entry name" value="Anthopleurin-A"/>
    <property type="match status" value="1"/>
</dbReference>
<dbReference type="InterPro" id="IPR023355">
    <property type="entry name" value="Myo_ane_neurotoxin_sf"/>
</dbReference>
<dbReference type="Pfam" id="PF00706">
    <property type="entry name" value="Toxin_4"/>
    <property type="match status" value="1"/>
</dbReference>
<dbReference type="SUPFAM" id="SSF57392">
    <property type="entry name" value="Defensin-like"/>
    <property type="match status" value="1"/>
</dbReference>
<evidence type="ECO:0000250" key="1"/>
<evidence type="ECO:0000250" key="2">
    <source>
        <dbReference type="UniProtKB" id="P0C280"/>
    </source>
</evidence>
<evidence type="ECO:0000255" key="3"/>
<evidence type="ECO:0000269" key="4">
    <source>
    </source>
</evidence>
<evidence type="ECO:0000303" key="5">
    <source>
    </source>
</evidence>
<evidence type="ECO:0000303" key="6">
    <source>
    </source>
</evidence>
<evidence type="ECO:0000305" key="7"/>
<evidence type="ECO:0000305" key="8">
    <source>
    </source>
</evidence>